<name>APT_ACIC1</name>
<comment type="function">
    <text evidence="1">Catalyzes a salvage reaction resulting in the formation of AMP, that is energically less costly than de novo synthesis.</text>
</comment>
<comment type="catalytic activity">
    <reaction evidence="1">
        <text>AMP + diphosphate = 5-phospho-alpha-D-ribose 1-diphosphate + adenine</text>
        <dbReference type="Rhea" id="RHEA:16609"/>
        <dbReference type="ChEBI" id="CHEBI:16708"/>
        <dbReference type="ChEBI" id="CHEBI:33019"/>
        <dbReference type="ChEBI" id="CHEBI:58017"/>
        <dbReference type="ChEBI" id="CHEBI:456215"/>
        <dbReference type="EC" id="2.4.2.7"/>
    </reaction>
</comment>
<comment type="pathway">
    <text evidence="1">Purine metabolism; AMP biosynthesis via salvage pathway; AMP from adenine: step 1/1.</text>
</comment>
<comment type="subunit">
    <text evidence="1">Homodimer.</text>
</comment>
<comment type="subcellular location">
    <subcellularLocation>
        <location evidence="1">Cytoplasm</location>
    </subcellularLocation>
</comment>
<comment type="similarity">
    <text evidence="1">Belongs to the purine/pyrimidine phosphoribosyltransferase family.</text>
</comment>
<proteinExistence type="inferred from homology"/>
<keyword id="KW-0963">Cytoplasm</keyword>
<keyword id="KW-0328">Glycosyltransferase</keyword>
<keyword id="KW-0660">Purine salvage</keyword>
<keyword id="KW-1185">Reference proteome</keyword>
<keyword id="KW-0808">Transferase</keyword>
<dbReference type="EC" id="2.4.2.7" evidence="1"/>
<dbReference type="EMBL" id="CP000481">
    <property type="protein sequence ID" value="ABK53111.1"/>
    <property type="molecule type" value="Genomic_DNA"/>
</dbReference>
<dbReference type="RefSeq" id="WP_011720174.1">
    <property type="nucleotide sequence ID" value="NC_008578.1"/>
</dbReference>
<dbReference type="SMR" id="A0LUK1"/>
<dbReference type="FunCoup" id="A0LUK1">
    <property type="interactions" value="222"/>
</dbReference>
<dbReference type="STRING" id="351607.Acel_1339"/>
<dbReference type="KEGG" id="ace:Acel_1339"/>
<dbReference type="eggNOG" id="COG0503">
    <property type="taxonomic scope" value="Bacteria"/>
</dbReference>
<dbReference type="HOGENOM" id="CLU_063339_3_0_11"/>
<dbReference type="InParanoid" id="A0LUK1"/>
<dbReference type="OrthoDB" id="9803963at2"/>
<dbReference type="UniPathway" id="UPA00588">
    <property type="reaction ID" value="UER00646"/>
</dbReference>
<dbReference type="Proteomes" id="UP000008221">
    <property type="component" value="Chromosome"/>
</dbReference>
<dbReference type="GO" id="GO:0005737">
    <property type="term" value="C:cytoplasm"/>
    <property type="evidence" value="ECO:0007669"/>
    <property type="project" value="UniProtKB-SubCell"/>
</dbReference>
<dbReference type="GO" id="GO:0002055">
    <property type="term" value="F:adenine binding"/>
    <property type="evidence" value="ECO:0007669"/>
    <property type="project" value="TreeGrafter"/>
</dbReference>
<dbReference type="GO" id="GO:0003999">
    <property type="term" value="F:adenine phosphoribosyltransferase activity"/>
    <property type="evidence" value="ECO:0007669"/>
    <property type="project" value="UniProtKB-UniRule"/>
</dbReference>
<dbReference type="GO" id="GO:0016208">
    <property type="term" value="F:AMP binding"/>
    <property type="evidence" value="ECO:0007669"/>
    <property type="project" value="TreeGrafter"/>
</dbReference>
<dbReference type="GO" id="GO:0006168">
    <property type="term" value="P:adenine salvage"/>
    <property type="evidence" value="ECO:0007669"/>
    <property type="project" value="InterPro"/>
</dbReference>
<dbReference type="GO" id="GO:0044209">
    <property type="term" value="P:AMP salvage"/>
    <property type="evidence" value="ECO:0007669"/>
    <property type="project" value="UniProtKB-UniRule"/>
</dbReference>
<dbReference type="GO" id="GO:0006166">
    <property type="term" value="P:purine ribonucleoside salvage"/>
    <property type="evidence" value="ECO:0007669"/>
    <property type="project" value="UniProtKB-KW"/>
</dbReference>
<dbReference type="CDD" id="cd06223">
    <property type="entry name" value="PRTases_typeI"/>
    <property type="match status" value="1"/>
</dbReference>
<dbReference type="FunFam" id="3.40.50.2020:FF:000021">
    <property type="entry name" value="Adenine phosphoribosyltransferase"/>
    <property type="match status" value="1"/>
</dbReference>
<dbReference type="Gene3D" id="3.40.50.2020">
    <property type="match status" value="1"/>
</dbReference>
<dbReference type="HAMAP" id="MF_00004">
    <property type="entry name" value="Aden_phosphoribosyltr"/>
    <property type="match status" value="1"/>
</dbReference>
<dbReference type="InterPro" id="IPR005764">
    <property type="entry name" value="Ade_phspho_trans"/>
</dbReference>
<dbReference type="InterPro" id="IPR000836">
    <property type="entry name" value="PRibTrfase_dom"/>
</dbReference>
<dbReference type="InterPro" id="IPR029057">
    <property type="entry name" value="PRTase-like"/>
</dbReference>
<dbReference type="InterPro" id="IPR050054">
    <property type="entry name" value="UPRTase/APRTase"/>
</dbReference>
<dbReference type="NCBIfam" id="TIGR01090">
    <property type="entry name" value="apt"/>
    <property type="match status" value="1"/>
</dbReference>
<dbReference type="NCBIfam" id="NF002634">
    <property type="entry name" value="PRK02304.1-3"/>
    <property type="match status" value="1"/>
</dbReference>
<dbReference type="NCBIfam" id="NF002636">
    <property type="entry name" value="PRK02304.1-5"/>
    <property type="match status" value="1"/>
</dbReference>
<dbReference type="PANTHER" id="PTHR32315">
    <property type="entry name" value="ADENINE PHOSPHORIBOSYLTRANSFERASE"/>
    <property type="match status" value="1"/>
</dbReference>
<dbReference type="PANTHER" id="PTHR32315:SF3">
    <property type="entry name" value="ADENINE PHOSPHORIBOSYLTRANSFERASE"/>
    <property type="match status" value="1"/>
</dbReference>
<dbReference type="Pfam" id="PF00156">
    <property type="entry name" value="Pribosyltran"/>
    <property type="match status" value="1"/>
</dbReference>
<dbReference type="SUPFAM" id="SSF53271">
    <property type="entry name" value="PRTase-like"/>
    <property type="match status" value="1"/>
</dbReference>
<dbReference type="PROSITE" id="PS00103">
    <property type="entry name" value="PUR_PYR_PR_TRANSFER"/>
    <property type="match status" value="1"/>
</dbReference>
<organism>
    <name type="scientific">Acidothermus cellulolyticus (strain ATCC 43068 / DSM 8971 / 11B)</name>
    <dbReference type="NCBI Taxonomy" id="351607"/>
    <lineage>
        <taxon>Bacteria</taxon>
        <taxon>Bacillati</taxon>
        <taxon>Actinomycetota</taxon>
        <taxon>Actinomycetes</taxon>
        <taxon>Acidothermales</taxon>
        <taxon>Acidothermaceae</taxon>
        <taxon>Acidothermus</taxon>
    </lineage>
</organism>
<gene>
    <name evidence="1" type="primary">apt</name>
    <name type="ordered locus">Acel_1339</name>
</gene>
<accession>A0LUK1</accession>
<reference key="1">
    <citation type="journal article" date="2009" name="Genome Res.">
        <title>Complete genome of the cellulolytic thermophile Acidothermus cellulolyticus 11B provides insights into its ecophysiological and evolutionary adaptations.</title>
        <authorList>
            <person name="Barabote R.D."/>
            <person name="Xie G."/>
            <person name="Leu D.H."/>
            <person name="Normand P."/>
            <person name="Necsulea A."/>
            <person name="Daubin V."/>
            <person name="Medigue C."/>
            <person name="Adney W.S."/>
            <person name="Xu X.C."/>
            <person name="Lapidus A."/>
            <person name="Parales R.E."/>
            <person name="Detter C."/>
            <person name="Pujic P."/>
            <person name="Bruce D."/>
            <person name="Lavire C."/>
            <person name="Challacombe J.F."/>
            <person name="Brettin T.S."/>
            <person name="Berry A.M."/>
        </authorList>
    </citation>
    <scope>NUCLEOTIDE SEQUENCE [LARGE SCALE GENOMIC DNA]</scope>
    <source>
        <strain>ATCC 43068 / DSM 8971 / 11B</strain>
    </source>
</reference>
<sequence length="177" mass="18718">MPPADIGELVAAHIRDIPDYPSPGIVFKDITPLLAEPAVFAAVVDALVRDYQHGTVDKVVGIEARGFIVAAPVAYHLGAGFVPMRKKGKLPYRTLETSYALEYGTATIEVHVDAFRPGDRVLVVDDVLATGGTAAAALELIDQASAKAVGLSFLIELSALGGRSRLPASMVRSLLRV</sequence>
<evidence type="ECO:0000255" key="1">
    <source>
        <dbReference type="HAMAP-Rule" id="MF_00004"/>
    </source>
</evidence>
<feature type="chain" id="PRO_0000321329" description="Adenine phosphoribosyltransferase">
    <location>
        <begin position="1"/>
        <end position="177"/>
    </location>
</feature>
<protein>
    <recommendedName>
        <fullName evidence="1">Adenine phosphoribosyltransferase</fullName>
        <shortName evidence="1">APRT</shortName>
        <ecNumber evidence="1">2.4.2.7</ecNumber>
    </recommendedName>
</protein>